<accession>Q6TGQ8</accession>
<accession>A0A2H4N3D4</accession>
<keyword id="KW-0044">Antibiotic</keyword>
<keyword id="KW-0929">Antimicrobial</keyword>
<keyword id="KW-0053">Apoptosis</keyword>
<keyword id="KW-0204">Cytolysis</keyword>
<keyword id="KW-0903">Direct protein sequencing</keyword>
<keyword id="KW-1015">Disulfide bond</keyword>
<keyword id="KW-0274">FAD</keyword>
<keyword id="KW-0285">Flavoprotein</keyword>
<keyword id="KW-0325">Glycoprotein</keyword>
<keyword id="KW-0354">Hemolysis</keyword>
<keyword id="KW-1199">Hemostasis impairing toxin</keyword>
<keyword id="KW-0560">Oxidoreductase</keyword>
<keyword id="KW-1202">Platelet aggregation activating toxin</keyword>
<keyword id="KW-0964">Secreted</keyword>
<keyword id="KW-0732">Signal</keyword>
<keyword id="KW-0800">Toxin</keyword>
<reference evidence="13" key="1">
    <citation type="journal article" date="2017" name="Toxicon">
        <title>New findings from the first transcriptome of the Bothrops moojeni snake venom gland.</title>
        <authorList>
            <person name="Amorim F.G."/>
            <person name="Morandi-Filho R."/>
            <person name="Fujimura P.T."/>
            <person name="Ueira-Vieira C."/>
            <person name="Sampaio S.V."/>
        </authorList>
    </citation>
    <scope>NUCLEOTIDE SEQUENCE [MRNA]</scope>
    <source>
        <tissue>Venom gland</tissue>
    </source>
</reference>
<reference evidence="12" key="2">
    <citation type="journal article" date="2007" name="Biochem. Biophys. Res. Commun.">
        <title>Molecular approaches for structural characterization of Bothrops L-amino acid oxidases with antiprotozoal activity: cDNA cloning, comparative sequence analysis, and molecular modeling.</title>
        <authorList>
            <person name="Franca S.C."/>
            <person name="Kashima S."/>
            <person name="Roberto P.G."/>
            <person name="Marins M."/>
            <person name="Ticli F.K."/>
            <person name="Pereira J.O."/>
            <person name="Astolfi-Filho S."/>
            <person name="Stabeli R.G."/>
            <person name="Magro A.J."/>
            <person name="Fontes M.R."/>
            <person name="Sampaio S.V."/>
            <person name="Soares A.M."/>
        </authorList>
    </citation>
    <scope>NUCLEOTIDE SEQUENCE [MRNA] OF 13-490</scope>
    <scope>FUNCTION</scope>
    <scope>3D-STRUCTURE MODELING</scope>
    <source>
        <tissue>Venom</tissue>
        <tissue>Venom gland</tissue>
    </source>
</reference>
<reference key="3">
    <citation type="journal article" date="2007" name="Int. J. Biol. Macromol.">
        <title>Cytotoxic L-amino acid oxidase from Bothrops moojeni: biochemical and functional characterization.</title>
        <authorList>
            <person name="Stabeli R.G."/>
            <person name="Sant'Ana C.D."/>
            <person name="Ribeiro P.H."/>
            <person name="Costa T.R."/>
            <person name="Ticli F.K."/>
            <person name="Pires M.G."/>
            <person name="Nomizo A."/>
            <person name="Albuquerque S."/>
            <person name="Malta-Neto N.R."/>
            <person name="Marins M."/>
            <person name="Sampaio S.V."/>
            <person name="Soares A.M."/>
        </authorList>
    </citation>
    <scope>PROTEIN SEQUENCE OF 19-58</scope>
    <scope>FUNCTION</scope>
    <scope>SUBUNIT</scope>
    <scope>GLYCOSYLATION</scope>
    <scope>CIRCULAR DICHROISM</scope>
    <scope>BIOPHYSICOCHEMICAL PROPERTIES</scope>
    <scope>CATALYTIC ACTIVITY</scope>
    <scope>SUBSTRATE SPECIFICITY</scope>
    <source>
        <tissue>Venom</tissue>
    </source>
</reference>
<reference key="4">
    <citation type="journal article" date="2001" name="Biochem. Biophys. Res. Commun.">
        <title>Bothrops moojeni venom kills Leishmania spp. with hydrogen peroxide generated by its L-amino acid oxidase.</title>
        <authorList>
            <person name="Tempone A.G."/>
            <person name="Andrade H.F. Jr."/>
            <person name="Spencer P.J."/>
            <person name="Lourenco C.O."/>
            <person name="Rogero J.R."/>
            <person name="Nascimento N."/>
        </authorList>
    </citation>
    <scope>FUNCTION</scope>
    <scope>SUBUNIT</scope>
    <scope>SUBCELLULAR LOCATION</scope>
    <source>
        <tissue>Venom</tissue>
    </source>
</reference>
<reference key="5">
    <citation type="journal article" date="2018" name="J. Venom. Anim. Toxins Incl. Trop. Dis.">
        <title>Kinetic investigations and stability studies of two Bothrops L-amino acid oxidases.</title>
        <authorList>
            <person name="Costa T.R."/>
            <person name="Carone S.E.I."/>
            <person name="Tucci L.F.F."/>
            <person name="Menaldo D.L."/>
            <person name="Rosa-Garzon N.G."/>
            <person name="Cabral H."/>
            <person name="Sampaio S.V."/>
        </authorList>
    </citation>
    <scope>FUNCTION</scope>
    <scope>CATALYTIC ACTIVITY</scope>
    <scope>ACTIVITY REGULATION</scope>
    <scope>BIOPHYSICOCHEMICAL PROPERTIES</scope>
</reference>
<proteinExistence type="evidence at protein level"/>
<protein>
    <recommendedName>
        <fullName evidence="7">L-amino-acid oxidase BmooLAAO-I</fullName>
        <shortName>LAO</shortName>
        <ecNumber evidence="5">1.4.3.2</ecNumber>
    </recommendedName>
</protein>
<comment type="function">
    <text evidence="3 4 5 6">Catalyzes an oxidative deamination of predominantly hydrophobic and aromatic L-amino acids, thus producing hydrogen peroxide that may contribute to the toxicity of the venom (PubMed:17320169). Shows very high activity on L-Met, and L-Leu, high activity on L-Ile, L-Phe and L-Tyr and moderate activity on L-His, L-Val and L-Ala (PubMed:17320169, PubMed:30534149). Exhibits diverse biological activities, such as edema, apoptosis of tumor cell lines, antibacterial activities against both Gram-positive and Gram-negative bacteria, as well as induction of platelet aggregation. Effects of snake L-amino oxidases on platelets are controversial, since they either induce aggregation or inhibit agonist-induced aggregation. These different effects are probably due to different experimental conditions. Unlike other snake venom L-amino acid oxidases, does not induce hemorrhage. It may also induce hemolysis. Has parasiticidal activities against and leishmania, as a result of enzyme-catalyzed hydrogen peroxide production (PubMed:11162565, PubMed:17292326).</text>
</comment>
<comment type="catalytic activity">
    <reaction evidence="5 6">
        <text>an L-alpha-amino acid + O2 + H2O = a 2-oxocarboxylate + H2O2 + NH4(+)</text>
        <dbReference type="Rhea" id="RHEA:13781"/>
        <dbReference type="ChEBI" id="CHEBI:15377"/>
        <dbReference type="ChEBI" id="CHEBI:15379"/>
        <dbReference type="ChEBI" id="CHEBI:16240"/>
        <dbReference type="ChEBI" id="CHEBI:28938"/>
        <dbReference type="ChEBI" id="CHEBI:35179"/>
        <dbReference type="ChEBI" id="CHEBI:59869"/>
        <dbReference type="EC" id="1.4.3.2"/>
    </reaction>
</comment>
<comment type="catalytic activity">
    <reaction evidence="5 6">
        <text>L-leucine + O2 + H2O = 4-methyl-2-oxopentanoate + H2O2 + NH4(+)</text>
        <dbReference type="Rhea" id="RHEA:60996"/>
        <dbReference type="ChEBI" id="CHEBI:15377"/>
        <dbReference type="ChEBI" id="CHEBI:15379"/>
        <dbReference type="ChEBI" id="CHEBI:16240"/>
        <dbReference type="ChEBI" id="CHEBI:17865"/>
        <dbReference type="ChEBI" id="CHEBI:28938"/>
        <dbReference type="ChEBI" id="CHEBI:57427"/>
    </reaction>
</comment>
<comment type="catalytic activity">
    <reaction evidence="5 6">
        <text>L-phenylalanine + O2 + H2O = 3-phenylpyruvate + H2O2 + NH4(+)</text>
        <dbReference type="Rhea" id="RHEA:61240"/>
        <dbReference type="ChEBI" id="CHEBI:15377"/>
        <dbReference type="ChEBI" id="CHEBI:15379"/>
        <dbReference type="ChEBI" id="CHEBI:16240"/>
        <dbReference type="ChEBI" id="CHEBI:18005"/>
        <dbReference type="ChEBI" id="CHEBI:28938"/>
        <dbReference type="ChEBI" id="CHEBI:58095"/>
    </reaction>
</comment>
<comment type="catalytic activity">
    <reaction evidence="5">
        <text>L-tryptophan + O2 + H2O = indole-3-pyruvate + H2O2 + NH4(+)</text>
        <dbReference type="Rhea" id="RHEA:61244"/>
        <dbReference type="ChEBI" id="CHEBI:15377"/>
        <dbReference type="ChEBI" id="CHEBI:15379"/>
        <dbReference type="ChEBI" id="CHEBI:16240"/>
        <dbReference type="ChEBI" id="CHEBI:17640"/>
        <dbReference type="ChEBI" id="CHEBI:28938"/>
        <dbReference type="ChEBI" id="CHEBI:57912"/>
    </reaction>
</comment>
<comment type="catalytic activity">
    <reaction evidence="5 6">
        <text>L-methionine + O2 + H2O = 4-methylsulfanyl-2-oxobutanoate + H2O2 + NH4(+)</text>
        <dbReference type="Rhea" id="RHEA:61236"/>
        <dbReference type="ChEBI" id="CHEBI:15377"/>
        <dbReference type="ChEBI" id="CHEBI:15379"/>
        <dbReference type="ChEBI" id="CHEBI:16240"/>
        <dbReference type="ChEBI" id="CHEBI:16723"/>
        <dbReference type="ChEBI" id="CHEBI:28938"/>
        <dbReference type="ChEBI" id="CHEBI:57844"/>
    </reaction>
</comment>
<comment type="catalytic activity">
    <reaction evidence="5 6">
        <text>L-isoleucine + O2 + H2O = (S)-3-methyl-2-oxopentanoate + H2O2 + NH4(+)</text>
        <dbReference type="Rhea" id="RHEA:61232"/>
        <dbReference type="ChEBI" id="CHEBI:15377"/>
        <dbReference type="ChEBI" id="CHEBI:15379"/>
        <dbReference type="ChEBI" id="CHEBI:16240"/>
        <dbReference type="ChEBI" id="CHEBI:28938"/>
        <dbReference type="ChEBI" id="CHEBI:35146"/>
        <dbReference type="ChEBI" id="CHEBI:58045"/>
    </reaction>
</comment>
<comment type="catalytic activity">
    <reaction evidence="5 6">
        <text>L-histidine + O2 + H2O = 3-(imidazol-5-yl)pyruvate + H2O2 + NH4(+)</text>
        <dbReference type="Rhea" id="RHEA:61228"/>
        <dbReference type="ChEBI" id="CHEBI:15377"/>
        <dbReference type="ChEBI" id="CHEBI:15379"/>
        <dbReference type="ChEBI" id="CHEBI:16240"/>
        <dbReference type="ChEBI" id="CHEBI:28938"/>
        <dbReference type="ChEBI" id="CHEBI:57595"/>
        <dbReference type="ChEBI" id="CHEBI:58133"/>
    </reaction>
</comment>
<comment type="catalytic activity">
    <reaction evidence="5 6">
        <text>L-tyrosine + O2 + H2O = 3-(4-hydroxyphenyl)pyruvate + H2O2 + NH4(+)</text>
        <dbReference type="Rhea" id="RHEA:61248"/>
        <dbReference type="ChEBI" id="CHEBI:15377"/>
        <dbReference type="ChEBI" id="CHEBI:15379"/>
        <dbReference type="ChEBI" id="CHEBI:16240"/>
        <dbReference type="ChEBI" id="CHEBI:28938"/>
        <dbReference type="ChEBI" id="CHEBI:36242"/>
        <dbReference type="ChEBI" id="CHEBI:58315"/>
    </reaction>
</comment>
<comment type="catalytic activity">
    <reaction evidence="5">
        <text>L-alanine + O2 + H2O = pyruvate + H2O2 + NH4(+)</text>
        <dbReference type="Rhea" id="RHEA:61264"/>
        <dbReference type="ChEBI" id="CHEBI:15361"/>
        <dbReference type="ChEBI" id="CHEBI:15377"/>
        <dbReference type="ChEBI" id="CHEBI:15379"/>
        <dbReference type="ChEBI" id="CHEBI:16240"/>
        <dbReference type="ChEBI" id="CHEBI:28938"/>
        <dbReference type="ChEBI" id="CHEBI:57972"/>
    </reaction>
</comment>
<comment type="catalytic activity">
    <reaction evidence="5">
        <text>L-valine + O2 + H2O = 3-methyl-2-oxobutanoate + H2O2 + NH4(+)</text>
        <dbReference type="Rhea" id="RHEA:61252"/>
        <dbReference type="ChEBI" id="CHEBI:11851"/>
        <dbReference type="ChEBI" id="CHEBI:15377"/>
        <dbReference type="ChEBI" id="CHEBI:15379"/>
        <dbReference type="ChEBI" id="CHEBI:16240"/>
        <dbReference type="ChEBI" id="CHEBI:28938"/>
        <dbReference type="ChEBI" id="CHEBI:57762"/>
    </reaction>
</comment>
<comment type="cofactor">
    <cofactor evidence="1">
        <name>FAD</name>
        <dbReference type="ChEBI" id="CHEBI:57692"/>
    </cofactor>
</comment>
<comment type="activity regulation">
    <text evidence="6">Its enzymatic activities is reduced when it is exposed to Ca(2+), Zn(2+), Al(3+), Cu(2+) or Ni(2+) salts.</text>
</comment>
<comment type="biophysicochemical properties">
    <kinetics>
        <KM evidence="6">0.2 mM for L-Phe</KM>
        <KM evidence="6">0.2 mM for L-Leu</KM>
        <KM evidence="6">0.3 mM for L-Met</KM>
        <KM evidence="6">1.1 mM for L-Tyr</KM>
        <KM evidence="6">1.4 mM for L-Ile</KM>
        <KM evidence="6">7.4 mM for L-His</KM>
        <KM evidence="6">6.1 mM for L-Gln</KM>
    </kinetics>
    <phDependence>
        <text evidence="5 6">Optimum pH is 5.5-9.5.</text>
    </phDependence>
    <temperatureDependence>
        <text evidence="5 6">Optimum temperature depends on the study: 5-38 degrees Celsius (PubMed:17320169) and 60 degrees Celsius (PubMed:30534149).</text>
    </temperatureDependence>
</comment>
<comment type="subunit">
    <text evidence="3 5">Homodimer; non-covalently linked.</text>
</comment>
<comment type="subcellular location">
    <subcellularLocation>
        <location evidence="3">Secreted</location>
    </subcellularLocation>
</comment>
<comment type="tissue specificity">
    <text evidence="9">Expressed by the venom gland.</text>
</comment>
<comment type="PTM">
    <text evidence="5 8">N-glycosylated (Probable). The enzymatic activity is not affected by deglycosylation (PubMed:17320169).</text>
</comment>
<comment type="miscellaneous">
    <text evidence="5 6">Shows low or absent catalytic activity on L-Arg, L-Glu, L-Asp, L-Lys, L-Asn, L-Ser, L-Thr, L-Pro, L-Gln, L-Gly, and L-Cys (PubMed:17320169, PubMed:30534149). catalytic activity on L-Val and L-Ala is moderate or low, depending on the study (PubMed:17320169, PubMed:30534149).</text>
</comment>
<comment type="similarity">
    <text evidence="8">Belongs to the flavin monoamine oxidase family. FIG1 subfamily.</text>
</comment>
<organism>
    <name type="scientific">Bothrops moojeni</name>
    <name type="common">Lance-headed viper</name>
    <name type="synonym">Caissaca</name>
    <dbReference type="NCBI Taxonomy" id="98334"/>
    <lineage>
        <taxon>Eukaryota</taxon>
        <taxon>Metazoa</taxon>
        <taxon>Chordata</taxon>
        <taxon>Craniata</taxon>
        <taxon>Vertebrata</taxon>
        <taxon>Euteleostomi</taxon>
        <taxon>Lepidosauria</taxon>
        <taxon>Squamata</taxon>
        <taxon>Bifurcata</taxon>
        <taxon>Unidentata</taxon>
        <taxon>Episquamata</taxon>
        <taxon>Toxicofera</taxon>
        <taxon>Serpentes</taxon>
        <taxon>Colubroidea</taxon>
        <taxon>Viperidae</taxon>
        <taxon>Crotalinae</taxon>
        <taxon>Bothrops</taxon>
    </lineage>
</organism>
<sequence length="502" mass="56840">MNVFFTFSLLFLAALGSCADDRNPLEECFRETDYEEFLEIAKNGLSTTSNPKRVVIVGAGMSGLSAAYVLANAGHQVTVLEASERAGGRVKTYRNEKEGWYANLGPMRLPEKHRIVREYIRKFDLQLNEFSQENENAWYFIKNIRKRVGEVNKDPGVLEYPVKPSEVGKSAGQLYEESLQKAVEELRRTNCSYMLNKYDTYSTKEYLLKEGNLSPGAVDMIGDLLNEDSGYYVSFIESLKHDDIFAYEKRFDEIVGGMDKLPTSMYQAIQEKVHLNARVIKIQQDVKEVTVTYQTSEKETLSVTADYVIVCTTSRAARRIKFEPPLPPKKAHALRSVHYRSGTKIFLTCTKKFWEDDGIHGGKSTTDLPSRFIYYPNHNFPNGVGVIIAYGIGDDANYFQALDFEDCGDIVINDLSLIHQLPKEEIQAICRPSMIQRWSLDKYAMGGITTFTPYQFQHFSEALTAPVDRIYFAGEYTAQAHGWIDSTIKSGLRAARDVNSAS</sequence>
<evidence type="ECO:0000250" key="1">
    <source>
        <dbReference type="UniProtKB" id="P81382"/>
    </source>
</evidence>
<evidence type="ECO:0000255" key="2"/>
<evidence type="ECO:0000269" key="3">
    <source>
    </source>
</evidence>
<evidence type="ECO:0000269" key="4">
    <source>
    </source>
</evidence>
<evidence type="ECO:0000269" key="5">
    <source>
    </source>
</evidence>
<evidence type="ECO:0000269" key="6">
    <source>
    </source>
</evidence>
<evidence type="ECO:0000303" key="7">
    <source>
    </source>
</evidence>
<evidence type="ECO:0000305" key="8"/>
<evidence type="ECO:0000305" key="9">
    <source>
    </source>
</evidence>
<evidence type="ECO:0000305" key="10">
    <source>
    </source>
</evidence>
<evidence type="ECO:0000305" key="11">
    <source>
    </source>
</evidence>
<evidence type="ECO:0000312" key="12">
    <source>
        <dbReference type="EMBL" id="AAR31183.1"/>
    </source>
</evidence>
<evidence type="ECO:0000312" key="13">
    <source>
        <dbReference type="EMBL" id="ATU85535.1"/>
    </source>
</evidence>
<dbReference type="EC" id="1.4.3.2" evidence="5"/>
<dbReference type="EMBL" id="MG132016">
    <property type="protein sequence ID" value="ATU85535.1"/>
    <property type="molecule type" value="mRNA"/>
</dbReference>
<dbReference type="EMBL" id="AY398692">
    <property type="protein sequence ID" value="AAR31183.1"/>
    <property type="molecule type" value="mRNA"/>
</dbReference>
<dbReference type="SMR" id="Q6TGQ8"/>
<dbReference type="BRENDA" id="1.4.3.2">
    <property type="organism ID" value="913"/>
</dbReference>
<dbReference type="GO" id="GO:0005576">
    <property type="term" value="C:extracellular region"/>
    <property type="evidence" value="ECO:0000314"/>
    <property type="project" value="UniProtKB"/>
</dbReference>
<dbReference type="GO" id="GO:0001716">
    <property type="term" value="F:L-amino-acid oxidase activity"/>
    <property type="evidence" value="ECO:0000314"/>
    <property type="project" value="UniProtKB"/>
</dbReference>
<dbReference type="GO" id="GO:0106329">
    <property type="term" value="F:L-phenylalaine oxidase activity"/>
    <property type="evidence" value="ECO:0007669"/>
    <property type="project" value="RHEA"/>
</dbReference>
<dbReference type="GO" id="GO:0090729">
    <property type="term" value="F:toxin activity"/>
    <property type="evidence" value="ECO:0007669"/>
    <property type="project" value="UniProtKB-KW"/>
</dbReference>
<dbReference type="GO" id="GO:0009063">
    <property type="term" value="P:amino acid catabolic process"/>
    <property type="evidence" value="ECO:0007669"/>
    <property type="project" value="TreeGrafter"/>
</dbReference>
<dbReference type="GO" id="GO:0006915">
    <property type="term" value="P:apoptotic process"/>
    <property type="evidence" value="ECO:0007669"/>
    <property type="project" value="UniProtKB-KW"/>
</dbReference>
<dbReference type="GO" id="GO:0050829">
    <property type="term" value="P:defense response to Gram-negative bacterium"/>
    <property type="evidence" value="ECO:0000314"/>
    <property type="project" value="UniProtKB"/>
</dbReference>
<dbReference type="GO" id="GO:0050830">
    <property type="term" value="P:defense response to Gram-positive bacterium"/>
    <property type="evidence" value="ECO:0000314"/>
    <property type="project" value="UniProtKB"/>
</dbReference>
<dbReference type="GO" id="GO:0031640">
    <property type="term" value="P:killing of cells of another organism"/>
    <property type="evidence" value="ECO:0007669"/>
    <property type="project" value="UniProtKB-KW"/>
</dbReference>
<dbReference type="FunFam" id="1.10.405.10:FF:000004">
    <property type="entry name" value="Amine oxidase"/>
    <property type="match status" value="1"/>
</dbReference>
<dbReference type="FunFam" id="3.50.50.60:FF:000450">
    <property type="entry name" value="Amine oxidase"/>
    <property type="match status" value="1"/>
</dbReference>
<dbReference type="Gene3D" id="3.90.660.10">
    <property type="match status" value="1"/>
</dbReference>
<dbReference type="Gene3D" id="3.50.50.60">
    <property type="entry name" value="FAD/NAD(P)-binding domain"/>
    <property type="match status" value="1"/>
</dbReference>
<dbReference type="Gene3D" id="1.10.405.10">
    <property type="entry name" value="Guanine Nucleotide Dissociation Inhibitor, domain 1"/>
    <property type="match status" value="1"/>
</dbReference>
<dbReference type="InterPro" id="IPR002937">
    <property type="entry name" value="Amino_oxidase"/>
</dbReference>
<dbReference type="InterPro" id="IPR036188">
    <property type="entry name" value="FAD/NAD-bd_sf"/>
</dbReference>
<dbReference type="InterPro" id="IPR001613">
    <property type="entry name" value="Flavin_amine_oxidase"/>
</dbReference>
<dbReference type="InterPro" id="IPR050281">
    <property type="entry name" value="Flavin_monoamine_oxidase"/>
</dbReference>
<dbReference type="PANTHER" id="PTHR10742:SF355">
    <property type="entry name" value="AMINE OXIDASE"/>
    <property type="match status" value="1"/>
</dbReference>
<dbReference type="PANTHER" id="PTHR10742">
    <property type="entry name" value="FLAVIN MONOAMINE OXIDASE"/>
    <property type="match status" value="1"/>
</dbReference>
<dbReference type="Pfam" id="PF01593">
    <property type="entry name" value="Amino_oxidase"/>
    <property type="match status" value="1"/>
</dbReference>
<dbReference type="PRINTS" id="PR00757">
    <property type="entry name" value="AMINEOXDASEF"/>
</dbReference>
<dbReference type="SUPFAM" id="SSF54373">
    <property type="entry name" value="FAD-linked reductases, C-terminal domain"/>
    <property type="match status" value="1"/>
</dbReference>
<dbReference type="SUPFAM" id="SSF51905">
    <property type="entry name" value="FAD/NAD(P)-binding domain"/>
    <property type="match status" value="1"/>
</dbReference>
<name>OXLA_BOTMO</name>
<feature type="signal peptide" evidence="5">
    <location>
        <begin position="1"/>
        <end position="18"/>
    </location>
</feature>
<feature type="chain" id="PRO_0000273565" description="L-amino-acid oxidase BmooLAAO-I" evidence="10 11">
    <location>
        <begin position="19"/>
        <end position="502"/>
    </location>
</feature>
<feature type="binding site" evidence="1">
    <location>
        <begin position="61"/>
        <end position="62"/>
    </location>
    <ligand>
        <name>FAD</name>
        <dbReference type="ChEBI" id="CHEBI:57692"/>
    </ligand>
</feature>
<feature type="binding site" evidence="1">
    <location>
        <begin position="81"/>
        <end position="82"/>
    </location>
    <ligand>
        <name>FAD</name>
        <dbReference type="ChEBI" id="CHEBI:57692"/>
    </ligand>
</feature>
<feature type="binding site" evidence="1">
    <location>
        <position position="89"/>
    </location>
    <ligand>
        <name>FAD</name>
        <dbReference type="ChEBI" id="CHEBI:57692"/>
    </ligand>
</feature>
<feature type="binding site" evidence="1">
    <location>
        <begin position="105"/>
        <end position="108"/>
    </location>
    <ligand>
        <name>FAD</name>
        <dbReference type="ChEBI" id="CHEBI:57692"/>
    </ligand>
</feature>
<feature type="binding site" evidence="1">
    <location>
        <position position="108"/>
    </location>
    <ligand>
        <name>substrate</name>
    </ligand>
</feature>
<feature type="binding site" evidence="1">
    <location>
        <position position="241"/>
    </location>
    <ligand>
        <name>substrate</name>
    </ligand>
</feature>
<feature type="binding site" evidence="1">
    <location>
        <position position="279"/>
    </location>
    <ligand>
        <name>FAD</name>
        <dbReference type="ChEBI" id="CHEBI:57692"/>
    </ligand>
</feature>
<feature type="binding site" evidence="1">
    <location>
        <position position="390"/>
    </location>
    <ligand>
        <name>substrate</name>
    </ligand>
</feature>
<feature type="binding site" evidence="1">
    <location>
        <position position="475"/>
    </location>
    <ligand>
        <name>FAD</name>
        <dbReference type="ChEBI" id="CHEBI:57692"/>
    </ligand>
</feature>
<feature type="binding site" evidence="1">
    <location>
        <begin position="482"/>
        <end position="487"/>
    </location>
    <ligand>
        <name>FAD</name>
        <dbReference type="ChEBI" id="CHEBI:57692"/>
    </ligand>
</feature>
<feature type="binding site" evidence="1">
    <location>
        <begin position="482"/>
        <end position="483"/>
    </location>
    <ligand>
        <name>substrate</name>
    </ligand>
</feature>
<feature type="glycosylation site" description="N-linked (GlcNAc...) asparagine" evidence="2">
    <location>
        <position position="190"/>
    </location>
</feature>
<feature type="disulfide bond" evidence="1">
    <location>
        <begin position="28"/>
        <end position="191"/>
    </location>
</feature>
<feature type="disulfide bond" evidence="1">
    <location>
        <begin position="349"/>
        <end position="430"/>
    </location>
</feature>
<feature type="sequence conflict" description="In Ref. 2; AAR31183." evidence="8" ref="2">
    <original>AALGS</original>
    <variation>RKAPC</variation>
    <location>
        <begin position="13"/>
        <end position="17"/>
    </location>
</feature>
<feature type="sequence conflict" description="In Ref. 3; AA sequence." evidence="8" ref="3">
    <original>ST</original>
    <variation>KS</variation>
    <location>
        <begin position="46"/>
        <end position="47"/>
    </location>
</feature>
<feature type="sequence conflict" description="In Ref. 2; AAR31183." evidence="8" ref="2">
    <original>S</original>
    <variation>W</variation>
    <location>
        <position position="490"/>
    </location>
</feature>